<reference key="1">
    <citation type="journal article" date="2004" name="Genome Res.">
        <title>The status, quality, and expansion of the NIH full-length cDNA project: the Mammalian Gene Collection (MGC).</title>
        <authorList>
            <consortium name="The MGC Project Team"/>
        </authorList>
    </citation>
    <scope>NUCLEOTIDE SEQUENCE [LARGE SCALE MRNA]</scope>
    <source>
        <tissue>Testis</tissue>
    </source>
</reference>
<reference key="2">
    <citation type="journal article" date="2012" name="Nat. Commun.">
        <title>Quantitative maps of protein phosphorylation sites across 14 different rat organs and tissues.</title>
        <authorList>
            <person name="Lundby A."/>
            <person name="Secher A."/>
            <person name="Lage K."/>
            <person name="Nordsborg N.B."/>
            <person name="Dmytriyev A."/>
            <person name="Lundby C."/>
            <person name="Olsen J.V."/>
        </authorList>
    </citation>
    <scope>PHOSPHORYLATION [LARGE SCALE ANALYSIS] AT SER-71; SER-88 AND SER-89</scope>
    <scope>IDENTIFICATION BY MASS SPECTROMETRY [LARGE SCALE ANALYSIS]</scope>
</reference>
<dbReference type="EMBL" id="BC082080">
    <property type="protein sequence ID" value="AAH82080.1"/>
    <property type="molecule type" value="mRNA"/>
</dbReference>
<dbReference type="RefSeq" id="NP_001013096.1">
    <property type="nucleotide sequence ID" value="NM_001013078.1"/>
</dbReference>
<dbReference type="SMR" id="Q66H16"/>
<dbReference type="FunCoup" id="Q66H16">
    <property type="interactions" value="434"/>
</dbReference>
<dbReference type="GlyGen" id="Q66H16">
    <property type="glycosylation" value="1 site"/>
</dbReference>
<dbReference type="iPTMnet" id="Q66H16"/>
<dbReference type="PhosphoSitePlus" id="Q66H16"/>
<dbReference type="PaxDb" id="10116-ENSRNOP00000007808"/>
<dbReference type="GeneID" id="296074"/>
<dbReference type="KEGG" id="rno:296074"/>
<dbReference type="UCSC" id="RGD:1306874">
    <property type="organism name" value="rat"/>
</dbReference>
<dbReference type="AGR" id="RGD:1306874"/>
<dbReference type="CTD" id="161835"/>
<dbReference type="RGD" id="1306874">
    <property type="gene designation" value="Fsip1"/>
</dbReference>
<dbReference type="VEuPathDB" id="HostDB:ENSRNOG00000005888"/>
<dbReference type="eggNOG" id="ENOG502RXFB">
    <property type="taxonomic scope" value="Eukaryota"/>
</dbReference>
<dbReference type="HOGENOM" id="CLU_031884_1_0_1"/>
<dbReference type="InParanoid" id="Q66H16"/>
<dbReference type="PhylomeDB" id="Q66H16"/>
<dbReference type="TreeFam" id="TF351151"/>
<dbReference type="PRO" id="PR:Q66H16"/>
<dbReference type="Proteomes" id="UP000002494">
    <property type="component" value="Chromosome 3"/>
</dbReference>
<dbReference type="Bgee" id="ENSRNOG00000005888">
    <property type="expression patterns" value="Expressed in testis and 14 other cell types or tissues"/>
</dbReference>
<dbReference type="GO" id="GO:0001669">
    <property type="term" value="C:acrosomal vesicle"/>
    <property type="evidence" value="ECO:0000266"/>
    <property type="project" value="RGD"/>
</dbReference>
<dbReference type="GO" id="GO:0005634">
    <property type="term" value="C:nucleus"/>
    <property type="evidence" value="ECO:0000266"/>
    <property type="project" value="RGD"/>
</dbReference>
<dbReference type="GO" id="GO:0061827">
    <property type="term" value="C:sperm head"/>
    <property type="evidence" value="ECO:0000266"/>
    <property type="project" value="RGD"/>
</dbReference>
<dbReference type="GO" id="GO:0001675">
    <property type="term" value="P:acrosome assembly"/>
    <property type="evidence" value="ECO:0000266"/>
    <property type="project" value="RGD"/>
</dbReference>
<dbReference type="GO" id="GO:0035082">
    <property type="term" value="P:axoneme assembly"/>
    <property type="evidence" value="ECO:0000266"/>
    <property type="project" value="RGD"/>
</dbReference>
<dbReference type="GO" id="GO:0060271">
    <property type="term" value="P:cilium assembly"/>
    <property type="evidence" value="ECO:0000266"/>
    <property type="project" value="RGD"/>
</dbReference>
<dbReference type="GO" id="GO:0048873">
    <property type="term" value="P:homeostasis of number of cells within a tissue"/>
    <property type="evidence" value="ECO:0000266"/>
    <property type="project" value="RGD"/>
</dbReference>
<dbReference type="GO" id="GO:0007005">
    <property type="term" value="P:mitochondrion organization"/>
    <property type="evidence" value="ECO:0000266"/>
    <property type="project" value="RGD"/>
</dbReference>
<dbReference type="GO" id="GO:0007338">
    <property type="term" value="P:single fertilization"/>
    <property type="evidence" value="ECO:0000266"/>
    <property type="project" value="RGD"/>
</dbReference>
<dbReference type="GO" id="GO:0007033">
    <property type="term" value="P:vacuole organization"/>
    <property type="evidence" value="ECO:0000266"/>
    <property type="project" value="RGD"/>
</dbReference>
<dbReference type="GO" id="GO:0006900">
    <property type="term" value="P:vesicle budding from membrane"/>
    <property type="evidence" value="ECO:0000266"/>
    <property type="project" value="RGD"/>
</dbReference>
<dbReference type="InterPro" id="IPR026246">
    <property type="entry name" value="Fsip1"/>
</dbReference>
<dbReference type="PANTHER" id="PTHR22012">
    <property type="entry name" value="FIBROUS SHEATH INTERACTING PROTEIN 1"/>
    <property type="match status" value="1"/>
</dbReference>
<dbReference type="PANTHER" id="PTHR22012:SF2">
    <property type="entry name" value="FIBROUS SHEATH-INTERACTING PROTEIN 1"/>
    <property type="match status" value="1"/>
</dbReference>
<dbReference type="Pfam" id="PF15554">
    <property type="entry name" value="FSIP1"/>
    <property type="match status" value="1"/>
</dbReference>
<dbReference type="PRINTS" id="PR02075">
    <property type="entry name" value="FIBSHEATHIP1"/>
</dbReference>
<gene>
    <name type="primary">Fsip1</name>
</gene>
<accession>Q66H16</accession>
<protein>
    <recommendedName>
        <fullName>Fibrous sheath-interacting protein 1</fullName>
    </recommendedName>
</protein>
<keyword id="KW-0175">Coiled coil</keyword>
<keyword id="KW-0597">Phosphoprotein</keyword>
<keyword id="KW-1185">Reference proteome</keyword>
<organism>
    <name type="scientific">Rattus norvegicus</name>
    <name type="common">Rat</name>
    <dbReference type="NCBI Taxonomy" id="10116"/>
    <lineage>
        <taxon>Eukaryota</taxon>
        <taxon>Metazoa</taxon>
        <taxon>Chordata</taxon>
        <taxon>Craniata</taxon>
        <taxon>Vertebrata</taxon>
        <taxon>Euteleostomi</taxon>
        <taxon>Mammalia</taxon>
        <taxon>Eutheria</taxon>
        <taxon>Euarchontoglires</taxon>
        <taxon>Glires</taxon>
        <taxon>Rodentia</taxon>
        <taxon>Myomorpha</taxon>
        <taxon>Muroidea</taxon>
        <taxon>Muridae</taxon>
        <taxon>Murinae</taxon>
        <taxon>Rattus</taxon>
    </lineage>
</organism>
<evidence type="ECO:0000255" key="1"/>
<evidence type="ECO:0000256" key="2">
    <source>
        <dbReference type="SAM" id="MobiDB-lite"/>
    </source>
</evidence>
<evidence type="ECO:0000305" key="3"/>
<evidence type="ECO:0007744" key="4">
    <source>
    </source>
</evidence>
<sequence>MSMDIIKGNLDGISKPASSSRSRPGSRSSNGSLEVLSPEPGPVKIDMVNKLNSGKEGHTSDSRVEERRKISDDEWADNPRSTEPAQESSDEDSNLSQPQGTPEHSDDPKLEGTDAVLQNAIHKMHRLDKILAKRRIREKEIKKQGLEMRIKLWEELKSAKNTEDLENDEELENTKKFLYLTSKSAGTAAEPLHCKFEDDLFSVFHTQIPQETYENHTEKDFTCDVEKNGPLIKTEKQPFSNTEAIEPRSEHSQVFIIRNAEHSQDFIKRNIELAKSSRSPVVMVEGEKKRLDELLKGLEDTDSGLSSSEGDQCAWLVPGEGYTLAATESQQLAEIDIKLQELSVDSPAVFSLESQSNKGDMEHDSNEERNTEPTPGEKILRDNKEQRDRESRLRAIDGKLKEINEQVEECPVITPGKRNERITWRWLLAKILEPECKV</sequence>
<feature type="chain" id="PRO_0000314921" description="Fibrous sheath-interacting protein 1">
    <location>
        <begin position="1"/>
        <end position="438"/>
    </location>
</feature>
<feature type="region of interest" description="Disordered" evidence="2">
    <location>
        <begin position="1"/>
        <end position="111"/>
    </location>
</feature>
<feature type="region of interest" description="Disordered" evidence="2">
    <location>
        <begin position="354"/>
        <end position="390"/>
    </location>
</feature>
<feature type="coiled-coil region" evidence="1">
    <location>
        <begin position="131"/>
        <end position="157"/>
    </location>
</feature>
<feature type="compositionally biased region" description="Low complexity" evidence="2">
    <location>
        <begin position="18"/>
        <end position="32"/>
    </location>
</feature>
<feature type="compositionally biased region" description="Basic and acidic residues" evidence="2">
    <location>
        <begin position="53"/>
        <end position="72"/>
    </location>
</feature>
<feature type="compositionally biased region" description="Basic and acidic residues" evidence="2">
    <location>
        <begin position="359"/>
        <end position="371"/>
    </location>
</feature>
<feature type="compositionally biased region" description="Basic and acidic residues" evidence="2">
    <location>
        <begin position="378"/>
        <end position="390"/>
    </location>
</feature>
<feature type="modified residue" description="Phosphoserine" evidence="4">
    <location>
        <position position="71"/>
    </location>
</feature>
<feature type="modified residue" description="Phosphoserine" evidence="4">
    <location>
        <position position="88"/>
    </location>
</feature>
<feature type="modified residue" description="Phosphoserine" evidence="4">
    <location>
        <position position="89"/>
    </location>
</feature>
<name>FSIP1_RAT</name>
<comment type="similarity">
    <text evidence="3">Belongs to the FSIP1 family.</text>
</comment>
<proteinExistence type="evidence at protein level"/>